<evidence type="ECO:0000250" key="1"/>
<evidence type="ECO:0000250" key="2">
    <source>
        <dbReference type="UniProtKB" id="Q8N8A6"/>
    </source>
</evidence>
<evidence type="ECO:0000255" key="3">
    <source>
        <dbReference type="PROSITE-ProRule" id="PRU00541"/>
    </source>
</evidence>
<evidence type="ECO:0000255" key="4">
    <source>
        <dbReference type="PROSITE-ProRule" id="PRU00542"/>
    </source>
</evidence>
<evidence type="ECO:0000256" key="5">
    <source>
        <dbReference type="SAM" id="MobiDB-lite"/>
    </source>
</evidence>
<evidence type="ECO:0000305" key="6"/>
<evidence type="ECO:0007744" key="7">
    <source>
    </source>
</evidence>
<dbReference type="EC" id="3.6.4.13"/>
<dbReference type="EMBL" id="AK152599">
    <property type="protein sequence ID" value="BAE31347.1"/>
    <property type="molecule type" value="mRNA"/>
</dbReference>
<dbReference type="EMBL" id="BC060646">
    <property type="protein sequence ID" value="AAH60646.1"/>
    <property type="molecule type" value="mRNA"/>
</dbReference>
<dbReference type="CCDS" id="CCDS19528.1"/>
<dbReference type="RefSeq" id="NP_081432.2">
    <property type="nucleotide sequence ID" value="NM_027156.3"/>
</dbReference>
<dbReference type="SMR" id="Q6P9R1"/>
<dbReference type="BioGRID" id="213598">
    <property type="interactions" value="3"/>
</dbReference>
<dbReference type="FunCoup" id="Q6P9R1">
    <property type="interactions" value="4398"/>
</dbReference>
<dbReference type="STRING" id="10090.ENSMUSP00000031478"/>
<dbReference type="GlyGen" id="Q6P9R1">
    <property type="glycosylation" value="1 site"/>
</dbReference>
<dbReference type="iPTMnet" id="Q6P9R1"/>
<dbReference type="PhosphoSitePlus" id="Q6P9R1"/>
<dbReference type="jPOST" id="Q6P9R1"/>
<dbReference type="PaxDb" id="10090-ENSMUSP00000031478"/>
<dbReference type="PeptideAtlas" id="Q6P9R1"/>
<dbReference type="ProteomicsDB" id="277970"/>
<dbReference type="Pumba" id="Q6P9R1"/>
<dbReference type="Antibodypedia" id="32048">
    <property type="antibodies" value="119 antibodies from 24 providers"/>
</dbReference>
<dbReference type="DNASU" id="69663"/>
<dbReference type="Ensembl" id="ENSMUST00000031478.6">
    <property type="protein sequence ID" value="ENSMUSP00000031478.6"/>
    <property type="gene ID" value="ENSMUSG00000029504.6"/>
</dbReference>
<dbReference type="GeneID" id="69663"/>
<dbReference type="KEGG" id="mmu:69663"/>
<dbReference type="UCSC" id="uc008yre.2">
    <property type="organism name" value="mouse"/>
</dbReference>
<dbReference type="AGR" id="MGI:1916913"/>
<dbReference type="CTD" id="317781"/>
<dbReference type="MGI" id="MGI:1916913">
    <property type="gene designation" value="Ddx51"/>
</dbReference>
<dbReference type="VEuPathDB" id="HostDB:ENSMUSG00000029504"/>
<dbReference type="eggNOG" id="KOG0350">
    <property type="taxonomic scope" value="Eukaryota"/>
</dbReference>
<dbReference type="GeneTree" id="ENSGT00550000075141"/>
<dbReference type="HOGENOM" id="CLU_003041_15_3_1"/>
<dbReference type="InParanoid" id="Q6P9R1"/>
<dbReference type="OMA" id="HEVKAFD"/>
<dbReference type="OrthoDB" id="3370at2759"/>
<dbReference type="PhylomeDB" id="Q6P9R1"/>
<dbReference type="BioGRID-ORCS" id="69663">
    <property type="hits" value="28 hits in 81 CRISPR screens"/>
</dbReference>
<dbReference type="ChiTaRS" id="Ddx51">
    <property type="organism name" value="mouse"/>
</dbReference>
<dbReference type="PRO" id="PR:Q6P9R1"/>
<dbReference type="Proteomes" id="UP000000589">
    <property type="component" value="Chromosome 5"/>
</dbReference>
<dbReference type="RNAct" id="Q6P9R1">
    <property type="molecule type" value="protein"/>
</dbReference>
<dbReference type="Bgee" id="ENSMUSG00000029504">
    <property type="expression patterns" value="Expressed in epiblast (generic) and 255 other cell types or tissues"/>
</dbReference>
<dbReference type="ExpressionAtlas" id="Q6P9R1">
    <property type="expression patterns" value="baseline and differential"/>
</dbReference>
<dbReference type="GO" id="GO:0005730">
    <property type="term" value="C:nucleolus"/>
    <property type="evidence" value="ECO:0007669"/>
    <property type="project" value="UniProtKB-SubCell"/>
</dbReference>
<dbReference type="GO" id="GO:0005524">
    <property type="term" value="F:ATP binding"/>
    <property type="evidence" value="ECO:0007669"/>
    <property type="project" value="UniProtKB-KW"/>
</dbReference>
<dbReference type="GO" id="GO:0016887">
    <property type="term" value="F:ATP hydrolysis activity"/>
    <property type="evidence" value="ECO:0007669"/>
    <property type="project" value="RHEA"/>
</dbReference>
<dbReference type="GO" id="GO:0003723">
    <property type="term" value="F:RNA binding"/>
    <property type="evidence" value="ECO:0007669"/>
    <property type="project" value="UniProtKB-KW"/>
</dbReference>
<dbReference type="GO" id="GO:0003724">
    <property type="term" value="F:RNA helicase activity"/>
    <property type="evidence" value="ECO:0007669"/>
    <property type="project" value="UniProtKB-EC"/>
</dbReference>
<dbReference type="GO" id="GO:0006364">
    <property type="term" value="P:rRNA processing"/>
    <property type="evidence" value="ECO:0007669"/>
    <property type="project" value="UniProtKB-KW"/>
</dbReference>
<dbReference type="CDD" id="cd17956">
    <property type="entry name" value="DEADc_DDX51"/>
    <property type="match status" value="1"/>
</dbReference>
<dbReference type="CDD" id="cd18787">
    <property type="entry name" value="SF2_C_DEAD"/>
    <property type="match status" value="1"/>
</dbReference>
<dbReference type="FunFam" id="3.40.50.300:FF:001539">
    <property type="entry name" value="ATP-dependent RNA helicase DDX51"/>
    <property type="match status" value="1"/>
</dbReference>
<dbReference type="Gene3D" id="3.40.50.300">
    <property type="entry name" value="P-loop containing nucleotide triphosphate hydrolases"/>
    <property type="match status" value="2"/>
</dbReference>
<dbReference type="InterPro" id="IPR011545">
    <property type="entry name" value="DEAD/DEAH_box_helicase_dom"/>
</dbReference>
<dbReference type="InterPro" id="IPR014001">
    <property type="entry name" value="Helicase_ATP-bd"/>
</dbReference>
<dbReference type="InterPro" id="IPR001650">
    <property type="entry name" value="Helicase_C-like"/>
</dbReference>
<dbReference type="InterPro" id="IPR027417">
    <property type="entry name" value="P-loop_NTPase"/>
</dbReference>
<dbReference type="InterPro" id="IPR000629">
    <property type="entry name" value="RNA-helicase_DEAD-box_CS"/>
</dbReference>
<dbReference type="PANTHER" id="PTHR24031">
    <property type="entry name" value="RNA HELICASE"/>
    <property type="match status" value="1"/>
</dbReference>
<dbReference type="Pfam" id="PF00270">
    <property type="entry name" value="DEAD"/>
    <property type="match status" value="1"/>
</dbReference>
<dbReference type="Pfam" id="PF00271">
    <property type="entry name" value="Helicase_C"/>
    <property type="match status" value="1"/>
</dbReference>
<dbReference type="SMART" id="SM00487">
    <property type="entry name" value="DEXDc"/>
    <property type="match status" value="1"/>
</dbReference>
<dbReference type="SMART" id="SM00490">
    <property type="entry name" value="HELICc"/>
    <property type="match status" value="1"/>
</dbReference>
<dbReference type="SUPFAM" id="SSF52540">
    <property type="entry name" value="P-loop containing nucleoside triphosphate hydrolases"/>
    <property type="match status" value="1"/>
</dbReference>
<dbReference type="PROSITE" id="PS00039">
    <property type="entry name" value="DEAD_ATP_HELICASE"/>
    <property type="match status" value="1"/>
</dbReference>
<dbReference type="PROSITE" id="PS51192">
    <property type="entry name" value="HELICASE_ATP_BIND_1"/>
    <property type="match status" value="1"/>
</dbReference>
<dbReference type="PROSITE" id="PS51194">
    <property type="entry name" value="HELICASE_CTER"/>
    <property type="match status" value="1"/>
</dbReference>
<sequence length="639" mass="70368">MALFHIARYAGPEAAGQGDTDAEAGSRARVLLERLQNRARERQQREPELETTGTAGEGEAAAAGKRRRRPRRRRRVSGSATPNSEAPRAKRRKADKDVDAGRGEEAPEELSAGAEDPGANPQEDVQRPPAPGRVLGDFARRKTPKVQPFLPAWLAKPSCVKKSVTEDLTPIEDIPEVHPDLQKQLRANGITSYFPVQAAVIPALLESADHGFLIGRGGYQPSDLCVSAPTGSGKTLAFVIPVVQALLHRVVCHIRALVVLPTKELAQQVSKVFNIYTDTTPLRVALVTGQKSLAKEQESLVQKTADGFRCLADIVVATPGRLVDHIDQTPGFSLQQLRFLIIDEADRMIDSMHQSWLPRVVAAAFYSEGPTGSCALLQRTQPQALTAASTCVPQMPLQKLLFSATLTQDPEKLQRLGLYQPRLFSTRLGQQSPKDTAEVDENSGKYTFPVGLTHHYVPCRLSSKPLIVLHLVLRMSCSRALCFTNSRENSHRLYLLAQAFGGVSVAEFSSRYGPGQRKKILKQFEQGKIQLLISTDATARGIDVQGVELVINYDAPQYLRTYVHRVGRTARAGKTGQAFTLLLKVQERKFLQMVSEAGVPELTHHEIPRKLLQPLVARYETALSQLEKTVKEEQKLKAA</sequence>
<protein>
    <recommendedName>
        <fullName>ATP-dependent RNA helicase DDX51</fullName>
        <ecNumber>3.6.4.13</ecNumber>
    </recommendedName>
    <alternativeName>
        <fullName>DEAD box protein 51</fullName>
    </alternativeName>
</protein>
<reference key="1">
    <citation type="journal article" date="2005" name="Science">
        <title>The transcriptional landscape of the mammalian genome.</title>
        <authorList>
            <person name="Carninci P."/>
            <person name="Kasukawa T."/>
            <person name="Katayama S."/>
            <person name="Gough J."/>
            <person name="Frith M.C."/>
            <person name="Maeda N."/>
            <person name="Oyama R."/>
            <person name="Ravasi T."/>
            <person name="Lenhard B."/>
            <person name="Wells C."/>
            <person name="Kodzius R."/>
            <person name="Shimokawa K."/>
            <person name="Bajic V.B."/>
            <person name="Brenner S.E."/>
            <person name="Batalov S."/>
            <person name="Forrest A.R."/>
            <person name="Zavolan M."/>
            <person name="Davis M.J."/>
            <person name="Wilming L.G."/>
            <person name="Aidinis V."/>
            <person name="Allen J.E."/>
            <person name="Ambesi-Impiombato A."/>
            <person name="Apweiler R."/>
            <person name="Aturaliya R.N."/>
            <person name="Bailey T.L."/>
            <person name="Bansal M."/>
            <person name="Baxter L."/>
            <person name="Beisel K.W."/>
            <person name="Bersano T."/>
            <person name="Bono H."/>
            <person name="Chalk A.M."/>
            <person name="Chiu K.P."/>
            <person name="Choudhary V."/>
            <person name="Christoffels A."/>
            <person name="Clutterbuck D.R."/>
            <person name="Crowe M.L."/>
            <person name="Dalla E."/>
            <person name="Dalrymple B.P."/>
            <person name="de Bono B."/>
            <person name="Della Gatta G."/>
            <person name="di Bernardo D."/>
            <person name="Down T."/>
            <person name="Engstrom P."/>
            <person name="Fagiolini M."/>
            <person name="Faulkner G."/>
            <person name="Fletcher C.F."/>
            <person name="Fukushima T."/>
            <person name="Furuno M."/>
            <person name="Futaki S."/>
            <person name="Gariboldi M."/>
            <person name="Georgii-Hemming P."/>
            <person name="Gingeras T.R."/>
            <person name="Gojobori T."/>
            <person name="Green R.E."/>
            <person name="Gustincich S."/>
            <person name="Harbers M."/>
            <person name="Hayashi Y."/>
            <person name="Hensch T.K."/>
            <person name="Hirokawa N."/>
            <person name="Hill D."/>
            <person name="Huminiecki L."/>
            <person name="Iacono M."/>
            <person name="Ikeo K."/>
            <person name="Iwama A."/>
            <person name="Ishikawa T."/>
            <person name="Jakt M."/>
            <person name="Kanapin A."/>
            <person name="Katoh M."/>
            <person name="Kawasawa Y."/>
            <person name="Kelso J."/>
            <person name="Kitamura H."/>
            <person name="Kitano H."/>
            <person name="Kollias G."/>
            <person name="Krishnan S.P."/>
            <person name="Kruger A."/>
            <person name="Kummerfeld S.K."/>
            <person name="Kurochkin I.V."/>
            <person name="Lareau L.F."/>
            <person name="Lazarevic D."/>
            <person name="Lipovich L."/>
            <person name="Liu J."/>
            <person name="Liuni S."/>
            <person name="McWilliam S."/>
            <person name="Madan Babu M."/>
            <person name="Madera M."/>
            <person name="Marchionni L."/>
            <person name="Matsuda H."/>
            <person name="Matsuzawa S."/>
            <person name="Miki H."/>
            <person name="Mignone F."/>
            <person name="Miyake S."/>
            <person name="Morris K."/>
            <person name="Mottagui-Tabar S."/>
            <person name="Mulder N."/>
            <person name="Nakano N."/>
            <person name="Nakauchi H."/>
            <person name="Ng P."/>
            <person name="Nilsson R."/>
            <person name="Nishiguchi S."/>
            <person name="Nishikawa S."/>
            <person name="Nori F."/>
            <person name="Ohara O."/>
            <person name="Okazaki Y."/>
            <person name="Orlando V."/>
            <person name="Pang K.C."/>
            <person name="Pavan W.J."/>
            <person name="Pavesi G."/>
            <person name="Pesole G."/>
            <person name="Petrovsky N."/>
            <person name="Piazza S."/>
            <person name="Reed J."/>
            <person name="Reid J.F."/>
            <person name="Ring B.Z."/>
            <person name="Ringwald M."/>
            <person name="Rost B."/>
            <person name="Ruan Y."/>
            <person name="Salzberg S.L."/>
            <person name="Sandelin A."/>
            <person name="Schneider C."/>
            <person name="Schoenbach C."/>
            <person name="Sekiguchi K."/>
            <person name="Semple C.A."/>
            <person name="Seno S."/>
            <person name="Sessa L."/>
            <person name="Sheng Y."/>
            <person name="Shibata Y."/>
            <person name="Shimada H."/>
            <person name="Shimada K."/>
            <person name="Silva D."/>
            <person name="Sinclair B."/>
            <person name="Sperling S."/>
            <person name="Stupka E."/>
            <person name="Sugiura K."/>
            <person name="Sultana R."/>
            <person name="Takenaka Y."/>
            <person name="Taki K."/>
            <person name="Tammoja K."/>
            <person name="Tan S.L."/>
            <person name="Tang S."/>
            <person name="Taylor M.S."/>
            <person name="Tegner J."/>
            <person name="Teichmann S.A."/>
            <person name="Ueda H.R."/>
            <person name="van Nimwegen E."/>
            <person name="Verardo R."/>
            <person name="Wei C.L."/>
            <person name="Yagi K."/>
            <person name="Yamanishi H."/>
            <person name="Zabarovsky E."/>
            <person name="Zhu S."/>
            <person name="Zimmer A."/>
            <person name="Hide W."/>
            <person name="Bult C."/>
            <person name="Grimmond S.M."/>
            <person name="Teasdale R.D."/>
            <person name="Liu E.T."/>
            <person name="Brusic V."/>
            <person name="Quackenbush J."/>
            <person name="Wahlestedt C."/>
            <person name="Mattick J.S."/>
            <person name="Hume D.A."/>
            <person name="Kai C."/>
            <person name="Sasaki D."/>
            <person name="Tomaru Y."/>
            <person name="Fukuda S."/>
            <person name="Kanamori-Katayama M."/>
            <person name="Suzuki M."/>
            <person name="Aoki J."/>
            <person name="Arakawa T."/>
            <person name="Iida J."/>
            <person name="Imamura K."/>
            <person name="Itoh M."/>
            <person name="Kato T."/>
            <person name="Kawaji H."/>
            <person name="Kawagashira N."/>
            <person name="Kawashima T."/>
            <person name="Kojima M."/>
            <person name="Kondo S."/>
            <person name="Konno H."/>
            <person name="Nakano K."/>
            <person name="Ninomiya N."/>
            <person name="Nishio T."/>
            <person name="Okada M."/>
            <person name="Plessy C."/>
            <person name="Shibata K."/>
            <person name="Shiraki T."/>
            <person name="Suzuki S."/>
            <person name="Tagami M."/>
            <person name="Waki K."/>
            <person name="Watahiki A."/>
            <person name="Okamura-Oho Y."/>
            <person name="Suzuki H."/>
            <person name="Kawai J."/>
            <person name="Hayashizaki Y."/>
        </authorList>
    </citation>
    <scope>NUCLEOTIDE SEQUENCE [LARGE SCALE MRNA]</scope>
    <source>
        <strain>C57BL/6J</strain>
        <tissue>Bone marrow</tissue>
    </source>
</reference>
<reference key="2">
    <citation type="journal article" date="2004" name="Genome Res.">
        <title>The status, quality, and expansion of the NIH full-length cDNA project: the Mammalian Gene Collection (MGC).</title>
        <authorList>
            <consortium name="The MGC Project Team"/>
        </authorList>
    </citation>
    <scope>NUCLEOTIDE SEQUENCE [LARGE SCALE MRNA]</scope>
    <source>
        <strain>C57BL/6J</strain>
        <tissue>Brain</tissue>
    </source>
</reference>
<reference key="3">
    <citation type="journal article" date="2010" name="Cell">
        <title>A tissue-specific atlas of mouse protein phosphorylation and expression.</title>
        <authorList>
            <person name="Huttlin E.L."/>
            <person name="Jedrychowski M.P."/>
            <person name="Elias J.E."/>
            <person name="Goswami T."/>
            <person name="Rad R."/>
            <person name="Beausoleil S.A."/>
            <person name="Villen J."/>
            <person name="Haas W."/>
            <person name="Sowa M.E."/>
            <person name="Gygi S.P."/>
        </authorList>
    </citation>
    <scope>PHOSPHORYLATION [LARGE SCALE ANALYSIS] AT SER-79 AND SER-432</scope>
    <scope>IDENTIFICATION BY MASS SPECTROMETRY [LARGE SCALE ANALYSIS]</scope>
    <source>
        <tissue>Kidney</tissue>
        <tissue>Spleen</tissue>
        <tissue>Testis</tissue>
    </source>
</reference>
<comment type="function">
    <text evidence="1">ATP-binding RNA helicase involved in the biogenesis of 60S ribosomal subunits.</text>
</comment>
<comment type="catalytic activity">
    <reaction>
        <text>ATP + H2O = ADP + phosphate + H(+)</text>
        <dbReference type="Rhea" id="RHEA:13065"/>
        <dbReference type="ChEBI" id="CHEBI:15377"/>
        <dbReference type="ChEBI" id="CHEBI:15378"/>
        <dbReference type="ChEBI" id="CHEBI:30616"/>
        <dbReference type="ChEBI" id="CHEBI:43474"/>
        <dbReference type="ChEBI" id="CHEBI:456216"/>
        <dbReference type="EC" id="3.6.4.13"/>
    </reaction>
</comment>
<comment type="subcellular location">
    <subcellularLocation>
        <location evidence="1">Nucleus</location>
        <location evidence="1">Nucleolus</location>
    </subcellularLocation>
</comment>
<comment type="domain">
    <text>The Q motif is unique to and characteristic of the DEAD box family of RNA helicases and controls ATP binding and hydrolysis.</text>
</comment>
<comment type="similarity">
    <text evidence="6">Belongs to the DEAD box helicase family. DDX51/DBP6 subfamily.</text>
</comment>
<accession>Q6P9R1</accession>
<accession>Q3U7M2</accession>
<name>DDX51_MOUSE</name>
<keyword id="KW-0007">Acetylation</keyword>
<keyword id="KW-0067">ATP-binding</keyword>
<keyword id="KW-0347">Helicase</keyword>
<keyword id="KW-0378">Hydrolase</keyword>
<keyword id="KW-0547">Nucleotide-binding</keyword>
<keyword id="KW-0539">Nucleus</keyword>
<keyword id="KW-0597">Phosphoprotein</keyword>
<keyword id="KW-1185">Reference proteome</keyword>
<keyword id="KW-0690">Ribosome biogenesis</keyword>
<keyword id="KW-0694">RNA-binding</keyword>
<keyword id="KW-0698">rRNA processing</keyword>
<proteinExistence type="evidence at protein level"/>
<gene>
    <name type="primary">Ddx51</name>
</gene>
<organism>
    <name type="scientific">Mus musculus</name>
    <name type="common">Mouse</name>
    <dbReference type="NCBI Taxonomy" id="10090"/>
    <lineage>
        <taxon>Eukaryota</taxon>
        <taxon>Metazoa</taxon>
        <taxon>Chordata</taxon>
        <taxon>Craniata</taxon>
        <taxon>Vertebrata</taxon>
        <taxon>Euteleostomi</taxon>
        <taxon>Mammalia</taxon>
        <taxon>Eutheria</taxon>
        <taxon>Euarchontoglires</taxon>
        <taxon>Glires</taxon>
        <taxon>Rodentia</taxon>
        <taxon>Myomorpha</taxon>
        <taxon>Muroidea</taxon>
        <taxon>Muridae</taxon>
        <taxon>Murinae</taxon>
        <taxon>Mus</taxon>
        <taxon>Mus</taxon>
    </lineage>
</organism>
<feature type="initiator methionine" description="Removed" evidence="2">
    <location>
        <position position="1"/>
    </location>
</feature>
<feature type="chain" id="PRO_0000228097" description="ATP-dependent RNA helicase DDX51">
    <location>
        <begin position="2"/>
        <end position="639"/>
    </location>
</feature>
<feature type="domain" description="Helicase ATP-binding" evidence="3">
    <location>
        <begin position="215"/>
        <end position="424"/>
    </location>
</feature>
<feature type="domain" description="Helicase C-terminal" evidence="4">
    <location>
        <begin position="467"/>
        <end position="615"/>
    </location>
</feature>
<feature type="region of interest" description="Disordered" evidence="5">
    <location>
        <begin position="1"/>
        <end position="131"/>
    </location>
</feature>
<feature type="short sequence motif" description="Q motif">
    <location>
        <begin position="193"/>
        <end position="201"/>
    </location>
</feature>
<feature type="short sequence motif" description="DEAD box">
    <location>
        <begin position="343"/>
        <end position="346"/>
    </location>
</feature>
<feature type="compositionally biased region" description="Basic and acidic residues" evidence="5">
    <location>
        <begin position="24"/>
        <end position="48"/>
    </location>
</feature>
<feature type="compositionally biased region" description="Low complexity" evidence="5">
    <location>
        <begin position="50"/>
        <end position="63"/>
    </location>
</feature>
<feature type="compositionally biased region" description="Basic residues" evidence="5">
    <location>
        <begin position="64"/>
        <end position="76"/>
    </location>
</feature>
<feature type="compositionally biased region" description="Basic and acidic residues" evidence="5">
    <location>
        <begin position="94"/>
        <end position="105"/>
    </location>
</feature>
<feature type="binding site" evidence="3">
    <location>
        <begin position="228"/>
        <end position="235"/>
    </location>
    <ligand>
        <name>ATP</name>
        <dbReference type="ChEBI" id="CHEBI:30616"/>
    </ligand>
</feature>
<feature type="modified residue" description="N-acetylalanine" evidence="2">
    <location>
        <position position="2"/>
    </location>
</feature>
<feature type="modified residue" description="Phosphoserine" evidence="7">
    <location>
        <position position="79"/>
    </location>
</feature>
<feature type="modified residue" description="Phosphoserine" evidence="7">
    <location>
        <position position="432"/>
    </location>
</feature>
<feature type="sequence conflict" description="In Ref. 1; BAE31347." evidence="6" ref="1">
    <original>A</original>
    <variation>D</variation>
    <location>
        <position position="639"/>
    </location>
</feature>